<protein>
    <recommendedName>
        <fullName>Glutamyl-tRNA reductase</fullName>
        <shortName>GluTR</shortName>
        <ecNumber>1.2.1.70</ecNumber>
    </recommendedName>
</protein>
<comment type="function">
    <text evidence="2">Catalyzes the NADPH-dependent reduction of glutamyl-tRNA(Glu) to glutamate 1-semialdehyde (GSA).</text>
</comment>
<comment type="catalytic activity">
    <reaction evidence="2">
        <text>(S)-4-amino-5-oxopentanoate + tRNA(Glu) + NADP(+) = L-glutamyl-tRNA(Glu) + NADPH + H(+)</text>
        <dbReference type="Rhea" id="RHEA:12344"/>
        <dbReference type="Rhea" id="RHEA-COMP:9663"/>
        <dbReference type="Rhea" id="RHEA-COMP:9680"/>
        <dbReference type="ChEBI" id="CHEBI:15378"/>
        <dbReference type="ChEBI" id="CHEBI:57501"/>
        <dbReference type="ChEBI" id="CHEBI:57783"/>
        <dbReference type="ChEBI" id="CHEBI:58349"/>
        <dbReference type="ChEBI" id="CHEBI:78442"/>
        <dbReference type="ChEBI" id="CHEBI:78520"/>
        <dbReference type="EC" id="1.2.1.70"/>
    </reaction>
</comment>
<comment type="biophysicochemical properties">
    <phDependence>
        <text evidence="2">Optimum pH is 7.0.</text>
    </phDependence>
    <temperatureDependence>
        <text evidence="2">Optimum temperature is 65 degrees Celsius.</text>
    </temperatureDependence>
</comment>
<comment type="pathway">
    <text>Porphyrin-containing compound metabolism; protoporphyrin-IX biosynthesis; 5-aminolevulinate from L-glutamyl-tRNA(Glu): step 1/2.</text>
</comment>
<comment type="subunit">
    <text evidence="1">Homodimer.</text>
</comment>
<comment type="domain">
    <text evidence="1">Possesses an unusual extended V-shaped dimeric structure with each monomer consisting of three distinct domains arranged along a curved 'spinal' alpha-helix. The N-terminal catalytic domain specifically recognizes the glutamate moiety of the substrate. The second domain is the NADPH-binding domain, and the third C-terminal domain is responsible for dimerization (By similarity).</text>
</comment>
<comment type="miscellaneous">
    <text evidence="1">During catalysis, the active site Cys acts as a nucleophile attacking the alpha-carbonyl group of tRNA-bound glutamate with the formation of a thioester intermediate between enzyme and glutamate, and the concomitant release of tRNA(Glu). The thioester intermediate is finally reduced by direct hydride transfer from NADPH, to form the product GSA (By similarity).</text>
</comment>
<comment type="similarity">
    <text evidence="3">Belongs to the glutamyl-tRNA reductase family.</text>
</comment>
<name>HEM1_METTM</name>
<keyword id="KW-0521">NADP</keyword>
<keyword id="KW-0560">Oxidoreductase</keyword>
<keyword id="KW-0627">Porphyrin biosynthesis</keyword>
<dbReference type="EC" id="1.2.1.70"/>
<dbReference type="EMBL" id="X83691">
    <property type="protein sequence ID" value="CAA58664.1"/>
    <property type="molecule type" value="Genomic_DNA"/>
</dbReference>
<dbReference type="EMBL" id="CP001710">
    <property type="protein sequence ID" value="ADL58981.1"/>
    <property type="molecule type" value="Genomic_DNA"/>
</dbReference>
<dbReference type="PIR" id="S51136">
    <property type="entry name" value="S51136"/>
</dbReference>
<dbReference type="RefSeq" id="WP_013296193.1">
    <property type="nucleotide sequence ID" value="NC_014408.1"/>
</dbReference>
<dbReference type="SMR" id="P42809"/>
<dbReference type="STRING" id="79929.MTBMA_c13940"/>
<dbReference type="PaxDb" id="79929-MTBMA_c13940"/>
<dbReference type="GeneID" id="77400170"/>
<dbReference type="GeneID" id="9705103"/>
<dbReference type="KEGG" id="mmg:MTBMA_c13940"/>
<dbReference type="PATRIC" id="fig|79929.8.peg.1358"/>
<dbReference type="HOGENOM" id="CLU_035113_0_0_2"/>
<dbReference type="OrthoDB" id="4562at2157"/>
<dbReference type="UniPathway" id="UPA00251">
    <property type="reaction ID" value="UER00316"/>
</dbReference>
<dbReference type="Proteomes" id="UP000000345">
    <property type="component" value="Chromosome"/>
</dbReference>
<dbReference type="GO" id="GO:0008883">
    <property type="term" value="F:glutamyl-tRNA reductase activity"/>
    <property type="evidence" value="ECO:0007669"/>
    <property type="project" value="UniProtKB-UniRule"/>
</dbReference>
<dbReference type="GO" id="GO:0050661">
    <property type="term" value="F:NADP binding"/>
    <property type="evidence" value="ECO:0007669"/>
    <property type="project" value="InterPro"/>
</dbReference>
<dbReference type="GO" id="GO:0019353">
    <property type="term" value="P:protoporphyrinogen IX biosynthetic process from glutamate"/>
    <property type="evidence" value="ECO:0007669"/>
    <property type="project" value="TreeGrafter"/>
</dbReference>
<dbReference type="CDD" id="cd05213">
    <property type="entry name" value="NAD_bind_Glutamyl_tRNA_reduct"/>
    <property type="match status" value="1"/>
</dbReference>
<dbReference type="FunFam" id="3.40.50.720:FF:000031">
    <property type="entry name" value="Glutamyl-tRNA reductase"/>
    <property type="match status" value="1"/>
</dbReference>
<dbReference type="Gene3D" id="3.30.460.30">
    <property type="entry name" value="Glutamyl-tRNA reductase, N-terminal domain"/>
    <property type="match status" value="1"/>
</dbReference>
<dbReference type="Gene3D" id="3.40.50.720">
    <property type="entry name" value="NAD(P)-binding Rossmann-like Domain"/>
    <property type="match status" value="1"/>
</dbReference>
<dbReference type="HAMAP" id="MF_00087">
    <property type="entry name" value="Glu_tRNA_reductase"/>
    <property type="match status" value="1"/>
</dbReference>
<dbReference type="InterPro" id="IPR000343">
    <property type="entry name" value="4pyrrol_synth_GluRdtase"/>
</dbReference>
<dbReference type="InterPro" id="IPR015896">
    <property type="entry name" value="4pyrrol_synth_GluRdtase_dimer"/>
</dbReference>
<dbReference type="InterPro" id="IPR015895">
    <property type="entry name" value="4pyrrol_synth_GluRdtase_N"/>
</dbReference>
<dbReference type="InterPro" id="IPR018214">
    <property type="entry name" value="GluRdtase_CS"/>
</dbReference>
<dbReference type="InterPro" id="IPR036453">
    <property type="entry name" value="GluRdtase_dimer_dom_sf"/>
</dbReference>
<dbReference type="InterPro" id="IPR036343">
    <property type="entry name" value="GluRdtase_N_sf"/>
</dbReference>
<dbReference type="InterPro" id="IPR036291">
    <property type="entry name" value="NAD(P)-bd_dom_sf"/>
</dbReference>
<dbReference type="InterPro" id="IPR006151">
    <property type="entry name" value="Shikm_DH/Glu-tRNA_Rdtase"/>
</dbReference>
<dbReference type="NCBIfam" id="TIGR01035">
    <property type="entry name" value="hemA"/>
    <property type="match status" value="1"/>
</dbReference>
<dbReference type="PANTHER" id="PTHR43013">
    <property type="entry name" value="GLUTAMYL-TRNA REDUCTASE"/>
    <property type="match status" value="1"/>
</dbReference>
<dbReference type="PANTHER" id="PTHR43013:SF1">
    <property type="entry name" value="GLUTAMYL-TRNA REDUCTASE"/>
    <property type="match status" value="1"/>
</dbReference>
<dbReference type="Pfam" id="PF00745">
    <property type="entry name" value="GlutR_dimer"/>
    <property type="match status" value="1"/>
</dbReference>
<dbReference type="Pfam" id="PF05201">
    <property type="entry name" value="GlutR_N"/>
    <property type="match status" value="1"/>
</dbReference>
<dbReference type="Pfam" id="PF01488">
    <property type="entry name" value="Shikimate_DH"/>
    <property type="match status" value="1"/>
</dbReference>
<dbReference type="PIRSF" id="PIRSF000445">
    <property type="entry name" value="4pyrrol_synth_GluRdtase"/>
    <property type="match status" value="1"/>
</dbReference>
<dbReference type="SUPFAM" id="SSF69742">
    <property type="entry name" value="Glutamyl tRNA-reductase catalytic, N-terminal domain"/>
    <property type="match status" value="1"/>
</dbReference>
<dbReference type="SUPFAM" id="SSF69075">
    <property type="entry name" value="Glutamyl tRNA-reductase dimerization domain"/>
    <property type="match status" value="1"/>
</dbReference>
<dbReference type="SUPFAM" id="SSF51735">
    <property type="entry name" value="NAD(P)-binding Rossmann-fold domains"/>
    <property type="match status" value="1"/>
</dbReference>
<dbReference type="PROSITE" id="PS00747">
    <property type="entry name" value="GLUTR"/>
    <property type="match status" value="1"/>
</dbReference>
<reference key="1">
    <citation type="journal article" date="1996" name="Bioorg. Med. Chem.">
        <title>The hemA gene encoding glutamyl-tRNA reductase from the archaeon Methanobacterium thermoautotrophicum strain Marburg.</title>
        <authorList>
            <person name="Hungerer C."/>
            <person name="Weiss D.S."/>
            <person name="Thauer R.K."/>
            <person name="Jahn D."/>
        </authorList>
    </citation>
    <scope>NUCLEOTIDE SEQUENCE [GENOMIC DNA]</scope>
    <scope>FUNCTION</scope>
    <scope>CATALYTIC ACTIVITY</scope>
    <scope>BIOPHYSICOCHEMICAL PROPERTIES</scope>
    <source>
        <strain>ATCC BAA-927 / DSM 2133 / JCM 14651 / NBRC 100331 / OCM 82 / Marburg</strain>
    </source>
</reference>
<reference key="2">
    <citation type="journal article" date="2010" name="J. Bacteriol.">
        <title>Complete genome sequence of Methanothermobacter marburgensis, a methanoarchaeon model organism.</title>
        <authorList>
            <person name="Liesegang H."/>
            <person name="Kaster A.K."/>
            <person name="Wiezer A."/>
            <person name="Goenrich M."/>
            <person name="Wollherr A."/>
            <person name="Seedorf H."/>
            <person name="Gottschalk G."/>
            <person name="Thauer R.K."/>
        </authorList>
    </citation>
    <scope>NUCLEOTIDE SEQUENCE [LARGE SCALE GENOMIC DNA]</scope>
    <source>
        <strain>ATCC BAA-927 / DSM 2133 / JCM 14651 / NBRC 100331 / OCM 82 / Marburg</strain>
    </source>
</reference>
<evidence type="ECO:0000250" key="1"/>
<evidence type="ECO:0000269" key="2">
    <source>
    </source>
</evidence>
<evidence type="ECO:0000305" key="3"/>
<gene>
    <name type="primary">hemA</name>
    <name type="ordered locus">MTBMA_c13940</name>
</gene>
<feature type="chain" id="PRO_0000114106" description="Glutamyl-tRNA reductase">
    <location>
        <begin position="1"/>
        <end position="398"/>
    </location>
</feature>
<feature type="active site" description="Nucleophile" evidence="1">
    <location>
        <position position="46"/>
    </location>
</feature>
<feature type="binding site" evidence="1">
    <location>
        <begin position="45"/>
        <end position="48"/>
    </location>
    <ligand>
        <name>substrate</name>
    </ligand>
</feature>
<feature type="binding site" evidence="1">
    <location>
        <position position="88"/>
    </location>
    <ligand>
        <name>substrate</name>
    </ligand>
</feature>
<feature type="binding site" evidence="1">
    <location>
        <begin position="93"/>
        <end position="95"/>
    </location>
    <ligand>
        <name>substrate</name>
    </ligand>
</feature>
<feature type="binding site" evidence="1">
    <location>
        <position position="99"/>
    </location>
    <ligand>
        <name>substrate</name>
    </ligand>
</feature>
<feature type="binding site" evidence="1">
    <location>
        <begin position="168"/>
        <end position="173"/>
    </location>
    <ligand>
        <name>NADP(+)</name>
        <dbReference type="ChEBI" id="CHEBI:58349"/>
    </ligand>
</feature>
<feature type="site" description="Important for activity" evidence="1">
    <location>
        <position position="78"/>
    </location>
</feature>
<sequence>MILNIRLDHKTSDVKTMETASGRIEEIVGELEALGAVTEKVPLMTCNRVEYYLHVTGVPPEFDFNGFTVEKDEDALLHLLRLASGLESMIIGEDQILGQIKAARLQALREGTCGPLLDMVFTKAVHVGQTVRRKTKINRGSVSIGSAAVDLAESIHGDLKCKKVLVIGAGKMGTLVARALAEKHLKAIMVANRTYERAYQLACELGGDAIHFDRLNRALRDADVVISATGSPHYILTRERVMDAVPPERRSSIVMVDIANPRDIEESVRELGVRLFTIDDLRGVAEENRKRREAEAREAEGIVRAELELLLRAMKHREVEPLLAEIRGRMESLRQREAGKAIKKIENSKDPERVVEGLTRSIVDKIFHDIALKIRDAAERDDREFLRMCSELFDCDES</sequence>
<accession>P42809</accession>
<accession>D9PXN3</accession>
<organism>
    <name type="scientific">Methanothermobacter marburgensis (strain ATCC BAA-927 / DSM 2133 / JCM 14651 / NBRC 100331 / OCM 82 / Marburg)</name>
    <name type="common">Methanobacterium thermoautotrophicum</name>
    <dbReference type="NCBI Taxonomy" id="79929"/>
    <lineage>
        <taxon>Archaea</taxon>
        <taxon>Methanobacteriati</taxon>
        <taxon>Methanobacteriota</taxon>
        <taxon>Methanomada group</taxon>
        <taxon>Methanobacteria</taxon>
        <taxon>Methanobacteriales</taxon>
        <taxon>Methanobacteriaceae</taxon>
        <taxon>Methanothermobacter</taxon>
    </lineage>
</organism>
<proteinExistence type="evidence at protein level"/>